<proteinExistence type="evidence at protein level"/>
<gene>
    <name evidence="6" type="primary">BHLH062</name>
    <name evidence="5" type="synonym">BHLH1</name>
    <name evidence="10" type="ordered locus">Os07g0628500</name>
    <name evidence="7" type="ordered locus">LOC_Os07g43530</name>
    <name evidence="11" type="ORF">OsJ_25221</name>
    <name evidence="8" type="ORF">P0011H09.105</name>
    <name evidence="9" type="ORF">P0506F02.119</name>
</gene>
<name>BH062_ORYSJ</name>
<dbReference type="EMBL" id="AY222337">
    <property type="protein sequence ID" value="AAP12519.1"/>
    <property type="molecule type" value="mRNA"/>
</dbReference>
<dbReference type="EMBL" id="HQ858856">
    <property type="protein sequence ID" value="ADX60268.1"/>
    <property type="molecule type" value="mRNA"/>
</dbReference>
<dbReference type="EMBL" id="AP004260">
    <property type="protein sequence ID" value="BAD30518.1"/>
    <property type="molecule type" value="Genomic_DNA"/>
</dbReference>
<dbReference type="EMBL" id="AP004306">
    <property type="protein sequence ID" value="BAD30583.1"/>
    <property type="molecule type" value="Genomic_DNA"/>
</dbReference>
<dbReference type="EMBL" id="AP008213">
    <property type="protein sequence ID" value="BAF22264.1"/>
    <property type="molecule type" value="Genomic_DNA"/>
</dbReference>
<dbReference type="EMBL" id="CM000144">
    <property type="protein sequence ID" value="EEE67640.1"/>
    <property type="molecule type" value="Genomic_DNA"/>
</dbReference>
<dbReference type="EMBL" id="AK070963">
    <property type="protein sequence ID" value="BAG92229.1"/>
    <property type="molecule type" value="mRNA"/>
</dbReference>
<dbReference type="EMBL" id="AP014963">
    <property type="protein sequence ID" value="BAT02757.1"/>
    <property type="molecule type" value="Genomic_DNA"/>
</dbReference>
<dbReference type="RefSeq" id="XP_015645391.1">
    <property type="nucleotide sequence ID" value="XM_015789905.1"/>
</dbReference>
<dbReference type="RefSeq" id="XP_015645392.1">
    <property type="nucleotide sequence ID" value="XM_015789906.1"/>
</dbReference>
<dbReference type="RefSeq" id="XP_015645393.1">
    <property type="nucleotide sequence ID" value="XM_015789907.1"/>
</dbReference>
<dbReference type="SMR" id="Q69V10"/>
<dbReference type="FunCoup" id="Q69V10">
    <property type="interactions" value="895"/>
</dbReference>
<dbReference type="STRING" id="39947.Q69V10"/>
<dbReference type="PaxDb" id="39947-Q69V10"/>
<dbReference type="EnsemblPlants" id="Os07t0628500-01">
    <property type="protein sequence ID" value="Os07t0628500-01"/>
    <property type="gene ID" value="Os07g0628500"/>
</dbReference>
<dbReference type="EnsemblPlants" id="Os07t0628500-02">
    <property type="protein sequence ID" value="Os07t0628500-02"/>
    <property type="gene ID" value="Os07g0628500"/>
</dbReference>
<dbReference type="Gramene" id="Os07t0628500-01">
    <property type="protein sequence ID" value="Os07t0628500-01"/>
    <property type="gene ID" value="Os07g0628500"/>
</dbReference>
<dbReference type="Gramene" id="Os07t0628500-02">
    <property type="protein sequence ID" value="Os07t0628500-02"/>
    <property type="gene ID" value="Os07g0628500"/>
</dbReference>
<dbReference type="KEGG" id="dosa:Os07g0628500"/>
<dbReference type="eggNOG" id="ENOG502RYQ6">
    <property type="taxonomic scope" value="Eukaryota"/>
</dbReference>
<dbReference type="HOGENOM" id="CLU_053417_1_0_1"/>
<dbReference type="InParanoid" id="Q69V10"/>
<dbReference type="OMA" id="CDKKAPK"/>
<dbReference type="OrthoDB" id="1931098at2759"/>
<dbReference type="Proteomes" id="UP000000763">
    <property type="component" value="Chromosome 7"/>
</dbReference>
<dbReference type="Proteomes" id="UP000007752">
    <property type="component" value="Chromosome 7"/>
</dbReference>
<dbReference type="Proteomes" id="UP000059680">
    <property type="component" value="Chromosome 7"/>
</dbReference>
<dbReference type="GO" id="GO:0005634">
    <property type="term" value="C:nucleus"/>
    <property type="evidence" value="ECO:0000305"/>
    <property type="project" value="Gramene"/>
</dbReference>
<dbReference type="GO" id="GO:0003677">
    <property type="term" value="F:DNA binding"/>
    <property type="evidence" value="ECO:0007669"/>
    <property type="project" value="UniProtKB-KW"/>
</dbReference>
<dbReference type="GO" id="GO:0046983">
    <property type="term" value="F:protein dimerization activity"/>
    <property type="evidence" value="ECO:0007669"/>
    <property type="project" value="InterPro"/>
</dbReference>
<dbReference type="GO" id="GO:0006355">
    <property type="term" value="P:regulation of DNA-templated transcription"/>
    <property type="evidence" value="ECO:0000305"/>
    <property type="project" value="Gramene"/>
</dbReference>
<dbReference type="CDD" id="cd11446">
    <property type="entry name" value="bHLH_AtILR3_like"/>
    <property type="match status" value="1"/>
</dbReference>
<dbReference type="Gene3D" id="4.10.280.10">
    <property type="entry name" value="Helix-loop-helix DNA-binding domain"/>
    <property type="match status" value="1"/>
</dbReference>
<dbReference type="InterPro" id="IPR011598">
    <property type="entry name" value="bHLH_dom"/>
</dbReference>
<dbReference type="InterPro" id="IPR036638">
    <property type="entry name" value="HLH_DNA-bd_sf"/>
</dbReference>
<dbReference type="PANTHER" id="PTHR47075:SF6">
    <property type="entry name" value="TRANSCRIPTION FACTOR BHLH062"/>
    <property type="match status" value="1"/>
</dbReference>
<dbReference type="PANTHER" id="PTHR47075">
    <property type="entry name" value="TRANSCRIPTION FACTOR BHLH47"/>
    <property type="match status" value="1"/>
</dbReference>
<dbReference type="Pfam" id="PF23177">
    <property type="entry name" value="bHLH_IRO3"/>
    <property type="match status" value="1"/>
</dbReference>
<dbReference type="SUPFAM" id="SSF47459">
    <property type="entry name" value="HLH, helix-loop-helix DNA-binding domain"/>
    <property type="match status" value="1"/>
</dbReference>
<dbReference type="PROSITE" id="PS50888">
    <property type="entry name" value="BHLH"/>
    <property type="match status" value="1"/>
</dbReference>
<organism>
    <name type="scientific">Oryza sativa subsp. japonica</name>
    <name type="common">Rice</name>
    <dbReference type="NCBI Taxonomy" id="39947"/>
    <lineage>
        <taxon>Eukaryota</taxon>
        <taxon>Viridiplantae</taxon>
        <taxon>Streptophyta</taxon>
        <taxon>Embryophyta</taxon>
        <taxon>Tracheophyta</taxon>
        <taxon>Spermatophyta</taxon>
        <taxon>Magnoliopsida</taxon>
        <taxon>Liliopsida</taxon>
        <taxon>Poales</taxon>
        <taxon>Poaceae</taxon>
        <taxon>BOP clade</taxon>
        <taxon>Oryzoideae</taxon>
        <taxon>Oryzeae</taxon>
        <taxon>Oryzinae</taxon>
        <taxon>Oryza</taxon>
        <taxon>Oryza sativa</taxon>
    </lineage>
</organism>
<accession>Q69V10</accession>
<accession>Q6XNP2</accession>
<protein>
    <recommendedName>
        <fullName evidence="7">Transcription factor BHLH062</fullName>
    </recommendedName>
    <alternativeName>
        <fullName evidence="5">Basic helix-loop-helix protein 1</fullName>
        <shortName evidence="5">OsbHLH1</shortName>
    </alternativeName>
    <alternativeName>
        <fullName evidence="6">Basic helix-loop-helix protein 62</fullName>
        <shortName evidence="6">OsbHLH062</shortName>
    </alternativeName>
    <alternativeName>
        <fullName evidence="7">bHLH transcription factor bHLH062</fullName>
    </alternativeName>
</protein>
<evidence type="ECO:0000255" key="1"/>
<evidence type="ECO:0000255" key="2">
    <source>
        <dbReference type="PROSITE-ProRule" id="PRU00981"/>
    </source>
</evidence>
<evidence type="ECO:0000256" key="3">
    <source>
        <dbReference type="SAM" id="MobiDB-lite"/>
    </source>
</evidence>
<evidence type="ECO:0000269" key="4">
    <source>
    </source>
</evidence>
<evidence type="ECO:0000303" key="5">
    <source>
    </source>
</evidence>
<evidence type="ECO:0000303" key="6">
    <source>
    </source>
</evidence>
<evidence type="ECO:0000305" key="7"/>
<evidence type="ECO:0000312" key="8">
    <source>
        <dbReference type="EMBL" id="BAD30518.1"/>
    </source>
</evidence>
<evidence type="ECO:0000312" key="9">
    <source>
        <dbReference type="EMBL" id="BAD30583.1"/>
    </source>
</evidence>
<evidence type="ECO:0000312" key="10">
    <source>
        <dbReference type="EMBL" id="BAF22264.1"/>
    </source>
</evidence>
<evidence type="ECO:0000312" key="11">
    <source>
        <dbReference type="EMBL" id="EEE67640.1"/>
    </source>
</evidence>
<feature type="chain" id="PRO_0000440330" description="Transcription factor BHLH062">
    <location>
        <begin position="1"/>
        <end position="265"/>
    </location>
</feature>
<feature type="domain" description="bHLH" evidence="2">
    <location>
        <begin position="35"/>
        <end position="85"/>
    </location>
</feature>
<feature type="region of interest" description="Disordered" evidence="3">
    <location>
        <begin position="1"/>
        <end position="26"/>
    </location>
</feature>
<feature type="region of interest" description="Basic motif; degenerate" evidence="2">
    <location>
        <begin position="35"/>
        <end position="48"/>
    </location>
</feature>
<feature type="region of interest" description="Helix-loop-helix motif" evidence="2">
    <location>
        <begin position="49"/>
        <end position="85"/>
    </location>
</feature>
<feature type="region of interest" description="Disordered" evidence="3">
    <location>
        <begin position="200"/>
        <end position="265"/>
    </location>
</feature>
<feature type="coiled-coil region" evidence="1">
    <location>
        <begin position="75"/>
        <end position="130"/>
    </location>
</feature>
<feature type="compositionally biased region" description="Basic and acidic residues" evidence="3">
    <location>
        <begin position="210"/>
        <end position="220"/>
    </location>
</feature>
<feature type="compositionally biased region" description="Polar residues" evidence="3">
    <location>
        <begin position="245"/>
        <end position="256"/>
    </location>
</feature>
<feature type="sequence conflict" description="In Ref. 1; AAP12519." evidence="7" ref="1">
    <original>N</original>
    <variation>Y</variation>
    <location>
        <position position="117"/>
    </location>
</feature>
<feature type="sequence conflict" description="In Ref. 1; AAP12519." evidence="7" ref="1">
    <original>Q</original>
    <variation>K</variation>
    <location>
        <position position="179"/>
    </location>
</feature>
<reference key="1">
    <citation type="journal article" date="2003" name="Theor. Appl. Genet.">
        <title>A rice transcription factor OsbHLH1 is involved in cold stress response.</title>
        <authorList>
            <person name="Wang Y.J."/>
            <person name="Zhang Z.G."/>
            <person name="He X.J."/>
            <person name="Zhou H.L."/>
            <person name="Wen Y.X."/>
            <person name="Dai J.X."/>
            <person name="Zhang J.S."/>
            <person name="Chen S.Y."/>
        </authorList>
    </citation>
    <scope>NUCLEOTIDE SEQUENCE [MRNA]</scope>
</reference>
<reference key="2">
    <citation type="journal article" date="2009" name="Plant Physiol.">
        <title>GRASSIUS: a platform for comparative regulatory genomics across the grasses.</title>
        <authorList>
            <person name="Yilmaz A."/>
            <person name="Nishiyama M.Y."/>
            <person name="Fuentes B.G."/>
            <person name="Souza G.M."/>
            <person name="Janies D."/>
            <person name="Gray J."/>
            <person name="Grotewold E."/>
        </authorList>
    </citation>
    <scope>NUCLEOTIDE SEQUENCE [MRNA]</scope>
    <source>
        <strain>cv. Nipponbare</strain>
    </source>
</reference>
<reference key="3">
    <citation type="journal article" date="2005" name="Nature">
        <title>The map-based sequence of the rice genome.</title>
        <authorList>
            <consortium name="International rice genome sequencing project (IRGSP)"/>
        </authorList>
    </citation>
    <scope>NUCLEOTIDE SEQUENCE [LARGE SCALE GENOMIC DNA]</scope>
    <source>
        <strain>cv. Nipponbare</strain>
    </source>
</reference>
<reference key="4">
    <citation type="journal article" date="2008" name="Nucleic Acids Res.">
        <title>The rice annotation project database (RAP-DB): 2008 update.</title>
        <authorList>
            <consortium name="The rice annotation project (RAP)"/>
        </authorList>
    </citation>
    <scope>GENOME REANNOTATION</scope>
    <source>
        <strain>cv. Nipponbare</strain>
    </source>
</reference>
<reference key="5">
    <citation type="journal article" date="2013" name="Rice">
        <title>Improvement of the Oryza sativa Nipponbare reference genome using next generation sequence and optical map data.</title>
        <authorList>
            <person name="Kawahara Y."/>
            <person name="de la Bastide M."/>
            <person name="Hamilton J.P."/>
            <person name="Kanamori H."/>
            <person name="McCombie W.R."/>
            <person name="Ouyang S."/>
            <person name="Schwartz D.C."/>
            <person name="Tanaka T."/>
            <person name="Wu J."/>
            <person name="Zhou S."/>
            <person name="Childs K.L."/>
            <person name="Davidson R.M."/>
            <person name="Lin H."/>
            <person name="Quesada-Ocampo L."/>
            <person name="Vaillancourt B."/>
            <person name="Sakai H."/>
            <person name="Lee S.S."/>
            <person name="Kim J."/>
            <person name="Numa H."/>
            <person name="Itoh T."/>
            <person name="Buell C.R."/>
            <person name="Matsumoto T."/>
        </authorList>
    </citation>
    <scope>GENOME REANNOTATION</scope>
    <source>
        <strain>cv. Nipponbare</strain>
    </source>
</reference>
<reference key="6">
    <citation type="journal article" date="2005" name="PLoS Biol.">
        <title>The genomes of Oryza sativa: a history of duplications.</title>
        <authorList>
            <person name="Yu J."/>
            <person name="Wang J."/>
            <person name="Lin W."/>
            <person name="Li S."/>
            <person name="Li H."/>
            <person name="Zhou J."/>
            <person name="Ni P."/>
            <person name="Dong W."/>
            <person name="Hu S."/>
            <person name="Zeng C."/>
            <person name="Zhang J."/>
            <person name="Zhang Y."/>
            <person name="Li R."/>
            <person name="Xu Z."/>
            <person name="Li S."/>
            <person name="Li X."/>
            <person name="Zheng H."/>
            <person name="Cong L."/>
            <person name="Lin L."/>
            <person name="Yin J."/>
            <person name="Geng J."/>
            <person name="Li G."/>
            <person name="Shi J."/>
            <person name="Liu J."/>
            <person name="Lv H."/>
            <person name="Li J."/>
            <person name="Wang J."/>
            <person name="Deng Y."/>
            <person name="Ran L."/>
            <person name="Shi X."/>
            <person name="Wang X."/>
            <person name="Wu Q."/>
            <person name="Li C."/>
            <person name="Ren X."/>
            <person name="Wang J."/>
            <person name="Wang X."/>
            <person name="Li D."/>
            <person name="Liu D."/>
            <person name="Zhang X."/>
            <person name="Ji Z."/>
            <person name="Zhao W."/>
            <person name="Sun Y."/>
            <person name="Zhang Z."/>
            <person name="Bao J."/>
            <person name="Han Y."/>
            <person name="Dong L."/>
            <person name="Ji J."/>
            <person name="Chen P."/>
            <person name="Wu S."/>
            <person name="Liu J."/>
            <person name="Xiao Y."/>
            <person name="Bu D."/>
            <person name="Tan J."/>
            <person name="Yang L."/>
            <person name="Ye C."/>
            <person name="Zhang J."/>
            <person name="Xu J."/>
            <person name="Zhou Y."/>
            <person name="Yu Y."/>
            <person name="Zhang B."/>
            <person name="Zhuang S."/>
            <person name="Wei H."/>
            <person name="Liu B."/>
            <person name="Lei M."/>
            <person name="Yu H."/>
            <person name="Li Y."/>
            <person name="Xu H."/>
            <person name="Wei S."/>
            <person name="He X."/>
            <person name="Fang L."/>
            <person name="Zhang Z."/>
            <person name="Zhang Y."/>
            <person name="Huang X."/>
            <person name="Su Z."/>
            <person name="Tong W."/>
            <person name="Li J."/>
            <person name="Tong Z."/>
            <person name="Li S."/>
            <person name="Ye J."/>
            <person name="Wang L."/>
            <person name="Fang L."/>
            <person name="Lei T."/>
            <person name="Chen C.-S."/>
            <person name="Chen H.-C."/>
            <person name="Xu Z."/>
            <person name="Li H."/>
            <person name="Huang H."/>
            <person name="Zhang F."/>
            <person name="Xu H."/>
            <person name="Li N."/>
            <person name="Zhao C."/>
            <person name="Li S."/>
            <person name="Dong L."/>
            <person name="Huang Y."/>
            <person name="Li L."/>
            <person name="Xi Y."/>
            <person name="Qi Q."/>
            <person name="Li W."/>
            <person name="Zhang B."/>
            <person name="Hu W."/>
            <person name="Zhang Y."/>
            <person name="Tian X."/>
            <person name="Jiao Y."/>
            <person name="Liang X."/>
            <person name="Jin J."/>
            <person name="Gao L."/>
            <person name="Zheng W."/>
            <person name="Hao B."/>
            <person name="Liu S.-M."/>
            <person name="Wang W."/>
            <person name="Yuan L."/>
            <person name="Cao M."/>
            <person name="McDermott J."/>
            <person name="Samudrala R."/>
            <person name="Wang J."/>
            <person name="Wong G.K.-S."/>
            <person name="Yang H."/>
        </authorList>
    </citation>
    <scope>NUCLEOTIDE SEQUENCE [LARGE SCALE GENOMIC DNA]</scope>
    <source>
        <strain>cv. Nipponbare</strain>
    </source>
</reference>
<reference key="7">
    <citation type="journal article" date="2003" name="Science">
        <title>Collection, mapping, and annotation of over 28,000 cDNA clones from japonica rice.</title>
        <authorList>
            <consortium name="The rice full-length cDNA consortium"/>
        </authorList>
    </citation>
    <scope>NUCLEOTIDE SEQUENCE [LARGE SCALE MRNA]</scope>
    <source>
        <strain>cv. Nipponbare</strain>
    </source>
</reference>
<reference key="8">
    <citation type="journal article" date="2006" name="Plant Physiol.">
        <title>Genome-wide analysis of basic/helix-loop-helix transcription factor family in rice and Arabidopsis.</title>
        <authorList>
            <person name="Li X."/>
            <person name="Duan X."/>
            <person name="Jiang H."/>
            <person name="Sun Y."/>
            <person name="Tang Y."/>
            <person name="Yuan Z."/>
            <person name="Guo J."/>
            <person name="Liang W."/>
            <person name="Chen L."/>
            <person name="Yin J."/>
            <person name="Ma H."/>
            <person name="Wang J."/>
            <person name="Zhang D."/>
        </authorList>
    </citation>
    <scope>GENE FAMILY</scope>
    <scope>NOMENCLATURE</scope>
</reference>
<reference key="9">
    <citation type="journal article" date="2015" name="Plant Sci.">
        <title>OsJAZ9 acts as a transcriptional regulator in jasmonate signaling and modulates salt stress tolerance in rice.</title>
        <authorList>
            <person name="Wu H."/>
            <person name="Ye H."/>
            <person name="Yao R."/>
            <person name="Zhang T."/>
            <person name="Xiong L."/>
        </authorList>
    </citation>
    <scope>FUNCTION</scope>
    <scope>INTERACTION WITH TIFY11A/JAZ9</scope>
    <scope>SUBCELLULAR LOCATION</scope>
</reference>
<comment type="function">
    <text evidence="4">Transcription factor that plays a positive role in salt stress tolerance. Interacts with TIFY11A/JAZ9 and binds to the promoter of some potassium ion transporter genes to regulate potassium homeostasis during salt stress.</text>
</comment>
<comment type="subunit">
    <text evidence="4">Interacts with TIFY11A/JAZ9.</text>
</comment>
<comment type="subcellular location">
    <subcellularLocation>
        <location evidence="2 4">Nucleus</location>
    </subcellularLocation>
</comment>
<comment type="similarity">
    <text>Belongs to the bHLH protein family.</text>
</comment>
<comment type="caution">
    <text evidence="2">Contains a degenerate basic motif not likely to bind DNA.</text>
</comment>
<keyword id="KW-0175">Coiled coil</keyword>
<keyword id="KW-0238">DNA-binding</keyword>
<keyword id="KW-0539">Nucleus</keyword>
<keyword id="KW-1185">Reference proteome</keyword>
<keyword id="KW-0346">Stress response</keyword>
<keyword id="KW-0804">Transcription</keyword>
<keyword id="KW-0805">Transcription regulation</keyword>
<sequence>MVPRDRVNAAAAGGGGEGRLVQSGIVNKKCDKKAPKRIHKSEREKLKRDKQNDLFNELGNLLEPDRQNNGKACVLGETTRILKDLLSQVESLRKENSSLKNESHYVALERNELHDDNSMLRTEILELQNELRTRMEGNPVWSHVNTRPALRVPYPTTGVFPVQHLPHLPVTTTAAFPQQLPVIIEQHYAATPRELQLFPESATSEDSEPSQEHGISDHVTRPQPRYPTPTATLPVNLFPVFPGRQDQQCSSGTSGTNEEDRIGRS</sequence>